<dbReference type="EC" id="4.1.1.50" evidence="1"/>
<dbReference type="EMBL" id="CP000438">
    <property type="protein sequence ID" value="ABJ14156.1"/>
    <property type="molecule type" value="Genomic_DNA"/>
</dbReference>
<dbReference type="SMR" id="Q02FP9"/>
<dbReference type="KEGG" id="pau:PA14_63110"/>
<dbReference type="PseudoCAP" id="PA14_63110"/>
<dbReference type="HOGENOM" id="CLU_125470_2_3_6"/>
<dbReference type="BioCyc" id="PAER208963:G1G74-5339-MONOMER"/>
<dbReference type="UniPathway" id="UPA00331">
    <property type="reaction ID" value="UER00451"/>
</dbReference>
<dbReference type="Proteomes" id="UP000000653">
    <property type="component" value="Chromosome"/>
</dbReference>
<dbReference type="GO" id="GO:0005829">
    <property type="term" value="C:cytosol"/>
    <property type="evidence" value="ECO:0007669"/>
    <property type="project" value="TreeGrafter"/>
</dbReference>
<dbReference type="GO" id="GO:0004014">
    <property type="term" value="F:adenosylmethionine decarboxylase activity"/>
    <property type="evidence" value="ECO:0007669"/>
    <property type="project" value="UniProtKB-UniRule"/>
</dbReference>
<dbReference type="GO" id="GO:0008295">
    <property type="term" value="P:spermidine biosynthetic process"/>
    <property type="evidence" value="ECO:0007669"/>
    <property type="project" value="UniProtKB-UniRule"/>
</dbReference>
<dbReference type="FunFam" id="3.60.90.10:FF:000013">
    <property type="entry name" value="S-adenosylmethionine decarboxylase proenzyme"/>
    <property type="match status" value="1"/>
</dbReference>
<dbReference type="Gene3D" id="3.60.90.10">
    <property type="entry name" value="S-adenosylmethionine decarboxylase"/>
    <property type="match status" value="1"/>
</dbReference>
<dbReference type="HAMAP" id="MF_00464">
    <property type="entry name" value="AdoMetDC_1"/>
    <property type="match status" value="1"/>
</dbReference>
<dbReference type="InterPro" id="IPR003826">
    <property type="entry name" value="AdoMetDC_fam_prok"/>
</dbReference>
<dbReference type="InterPro" id="IPR016067">
    <property type="entry name" value="S-AdoMet_deCO2ase_core"/>
</dbReference>
<dbReference type="InterPro" id="IPR017716">
    <property type="entry name" value="S-AdoMet_deCOase_pro-enz"/>
</dbReference>
<dbReference type="NCBIfam" id="TIGR03330">
    <property type="entry name" value="SAM_DCase_Bsu"/>
    <property type="match status" value="1"/>
</dbReference>
<dbReference type="PANTHER" id="PTHR33866">
    <property type="entry name" value="S-ADENOSYLMETHIONINE DECARBOXYLASE PROENZYME"/>
    <property type="match status" value="1"/>
</dbReference>
<dbReference type="PANTHER" id="PTHR33866:SF2">
    <property type="entry name" value="S-ADENOSYLMETHIONINE DECARBOXYLASE PROENZYME"/>
    <property type="match status" value="1"/>
</dbReference>
<dbReference type="Pfam" id="PF02675">
    <property type="entry name" value="AdoMet_dc"/>
    <property type="match status" value="1"/>
</dbReference>
<dbReference type="SUPFAM" id="SSF56276">
    <property type="entry name" value="S-adenosylmethionine decarboxylase"/>
    <property type="match status" value="1"/>
</dbReference>
<name>SPEH_PSEAB</name>
<protein>
    <recommendedName>
        <fullName evidence="1">S-adenosylmethionine decarboxylase proenzyme</fullName>
        <shortName evidence="1">AdoMetDC</shortName>
        <shortName evidence="1">SAMDC</shortName>
        <ecNumber evidence="1">4.1.1.50</ecNumber>
    </recommendedName>
    <component>
        <recommendedName>
            <fullName evidence="1">S-adenosylmethionine decarboxylase beta chain</fullName>
        </recommendedName>
    </component>
    <component>
        <recommendedName>
            <fullName evidence="1">S-adenosylmethionine decarboxylase alpha chain</fullName>
        </recommendedName>
    </component>
</protein>
<keyword id="KW-0068">Autocatalytic cleavage</keyword>
<keyword id="KW-0210">Decarboxylase</keyword>
<keyword id="KW-0456">Lyase</keyword>
<keyword id="KW-0620">Polyamine biosynthesis</keyword>
<keyword id="KW-0670">Pyruvate</keyword>
<keyword id="KW-0949">S-adenosyl-L-methionine</keyword>
<keyword id="KW-0704">Schiff base</keyword>
<keyword id="KW-0745">Spermidine biosynthesis</keyword>
<keyword id="KW-0865">Zymogen</keyword>
<proteinExistence type="inferred from homology"/>
<gene>
    <name evidence="1" type="primary">speH</name>
    <name type="ordered locus">PA14_63110</name>
</gene>
<evidence type="ECO:0000255" key="1">
    <source>
        <dbReference type="HAMAP-Rule" id="MF_00464"/>
    </source>
</evidence>
<reference key="1">
    <citation type="journal article" date="2006" name="Genome Biol.">
        <title>Genomic analysis reveals that Pseudomonas aeruginosa virulence is combinatorial.</title>
        <authorList>
            <person name="Lee D.G."/>
            <person name="Urbach J.M."/>
            <person name="Wu G."/>
            <person name="Liberati N.T."/>
            <person name="Feinbaum R.L."/>
            <person name="Miyata S."/>
            <person name="Diggins L.T."/>
            <person name="He J."/>
            <person name="Saucier M."/>
            <person name="Deziel E."/>
            <person name="Friedman L."/>
            <person name="Li L."/>
            <person name="Grills G."/>
            <person name="Montgomery K."/>
            <person name="Kucherlapati R."/>
            <person name="Rahme L.G."/>
            <person name="Ausubel F.M."/>
        </authorList>
    </citation>
    <scope>NUCLEOTIDE SEQUENCE [LARGE SCALE GENOMIC DNA]</scope>
    <source>
        <strain>UCBPP-PA14</strain>
    </source>
</reference>
<comment type="function">
    <text evidence="1">Catalyzes the decarboxylation of S-adenosylmethionine to S-adenosylmethioninamine (dcAdoMet), the propylamine donor required for the synthesis of the polyamines spermine and spermidine from the diamine putrescine.</text>
</comment>
<comment type="catalytic activity">
    <reaction evidence="1">
        <text>S-adenosyl-L-methionine + H(+) = S-adenosyl 3-(methylsulfanyl)propylamine + CO2</text>
        <dbReference type="Rhea" id="RHEA:15981"/>
        <dbReference type="ChEBI" id="CHEBI:15378"/>
        <dbReference type="ChEBI" id="CHEBI:16526"/>
        <dbReference type="ChEBI" id="CHEBI:57443"/>
        <dbReference type="ChEBI" id="CHEBI:59789"/>
        <dbReference type="EC" id="4.1.1.50"/>
    </reaction>
</comment>
<comment type="cofactor">
    <cofactor evidence="1">
        <name>pyruvate</name>
        <dbReference type="ChEBI" id="CHEBI:15361"/>
    </cofactor>
    <text evidence="1">Binds 1 pyruvoyl group covalently per subunit.</text>
</comment>
<comment type="pathway">
    <text evidence="1">Amine and polyamine biosynthesis; S-adenosylmethioninamine biosynthesis; S-adenosylmethioninamine from S-adenosyl-L-methionine: step 1/1.</text>
</comment>
<comment type="subunit">
    <text evidence="1">Heterotetramer of two alpha and two beta chains arranged as a dimer of alpha/beta heterodimers.</text>
</comment>
<comment type="PTM">
    <text evidence="1">Is synthesized initially as an inactive proenzyme. Formation of the active enzyme involves a self-maturation process in which the active site pyruvoyl group is generated from an internal serine residue via an autocatalytic post-translational modification. Two non-identical subunits are generated from the proenzyme in this reaction, and the pyruvate is formed at the N-terminus of the alpha chain, which is derived from the carboxyl end of the proenzyme. The post-translation cleavage follows an unusual pathway, termed non-hydrolytic serinolysis, in which the side chain hydroxyl group of the serine supplies its oxygen atom to form the C-terminus of the beta chain, while the remainder of the serine residue undergoes an oxidative deamination to produce ammonia and the pyruvoyl group blocking the N-terminus of the alpha chain.</text>
</comment>
<comment type="similarity">
    <text evidence="1">Belongs to the prokaryotic AdoMetDC family. Type 1 subfamily.</text>
</comment>
<feature type="chain" id="PRO_1000013682" description="S-adenosylmethionine decarboxylase beta chain" evidence="1">
    <location>
        <begin position="1"/>
        <end position="72"/>
    </location>
</feature>
<feature type="chain" id="PRO_0000315031" description="S-adenosylmethionine decarboxylase alpha chain" evidence="1">
    <location>
        <begin position="73"/>
        <end position="160"/>
    </location>
</feature>
<feature type="active site" description="Schiff-base intermediate with substrate; via pyruvic acid" evidence="1">
    <location>
        <position position="73"/>
    </location>
</feature>
<feature type="active site" description="Proton acceptor; for processing activity" evidence="1">
    <location>
        <position position="78"/>
    </location>
</feature>
<feature type="active site" description="Proton donor; for catalytic activity" evidence="1">
    <location>
        <position position="93"/>
    </location>
</feature>
<feature type="site" description="Cleavage (non-hydrolytic); by autolysis" evidence="1">
    <location>
        <begin position="72"/>
        <end position="73"/>
    </location>
</feature>
<feature type="modified residue" description="Pyruvic acid (Ser); by autocatalysis" evidence="1">
    <location>
        <position position="73"/>
    </location>
</feature>
<organism>
    <name type="scientific">Pseudomonas aeruginosa (strain UCBPP-PA14)</name>
    <dbReference type="NCBI Taxonomy" id="208963"/>
    <lineage>
        <taxon>Bacteria</taxon>
        <taxon>Pseudomonadati</taxon>
        <taxon>Pseudomonadota</taxon>
        <taxon>Gammaproteobacteria</taxon>
        <taxon>Pseudomonadales</taxon>
        <taxon>Pseudomonadaceae</taxon>
        <taxon>Pseudomonas</taxon>
    </lineage>
</organism>
<sequence length="160" mass="17321">MAIQPLRLDPITVLGKQLVIELFDCVDQRFDDIQWIEESMLEAARQANATIITSAFHKFSPIGISGVVVIAESHLAIHTWPEYGYAAVDVFTCGDVLDGAQAVRVLSERLGSRRHLISSMDRGLGGHRLGLLSRSLAGNGPVDEDSPTLRWALGQGTGVA</sequence>
<accession>Q02FP9</accession>